<feature type="chain" id="PRO_0000428596" description="Ribonuclease VapC41">
    <location>
        <begin position="1"/>
        <end position="146"/>
    </location>
</feature>
<feature type="domain" description="PINc" evidence="1">
    <location>
        <begin position="3"/>
        <end position="142"/>
    </location>
</feature>
<feature type="binding site" evidence="1">
    <location>
        <position position="5"/>
    </location>
    <ligand>
        <name>Mg(2+)</name>
        <dbReference type="ChEBI" id="CHEBI:18420"/>
    </ligand>
</feature>
<feature type="binding site" evidence="1">
    <location>
        <position position="112"/>
    </location>
    <ligand>
        <name>Mg(2+)</name>
        <dbReference type="ChEBI" id="CHEBI:18420"/>
    </ligand>
</feature>
<dbReference type="EC" id="3.1.-.-" evidence="1"/>
<dbReference type="EMBL" id="AE000516">
    <property type="protein sequence ID" value="AAK46993.1"/>
    <property type="molecule type" value="Genomic_DNA"/>
</dbReference>
<dbReference type="PIR" id="E70500">
    <property type="entry name" value="E70500"/>
</dbReference>
<dbReference type="RefSeq" id="WP_003413460.1">
    <property type="nucleotide sequence ID" value="NZ_KK341227.1"/>
</dbReference>
<dbReference type="SMR" id="P9WF58"/>
<dbReference type="KEGG" id="mtc:MT2677"/>
<dbReference type="PATRIC" id="fig|83331.31.peg.2887"/>
<dbReference type="HOGENOM" id="CLU_146668_0_0_11"/>
<dbReference type="Proteomes" id="UP000001020">
    <property type="component" value="Chromosome"/>
</dbReference>
<dbReference type="GO" id="GO:0000287">
    <property type="term" value="F:magnesium ion binding"/>
    <property type="evidence" value="ECO:0007669"/>
    <property type="project" value="UniProtKB-UniRule"/>
</dbReference>
<dbReference type="GO" id="GO:0004540">
    <property type="term" value="F:RNA nuclease activity"/>
    <property type="evidence" value="ECO:0007669"/>
    <property type="project" value="InterPro"/>
</dbReference>
<dbReference type="GO" id="GO:0045926">
    <property type="term" value="P:negative regulation of growth"/>
    <property type="evidence" value="ECO:0007669"/>
    <property type="project" value="UniProtKB-ARBA"/>
</dbReference>
<dbReference type="Gene3D" id="3.40.50.1010">
    <property type="entry name" value="5'-nuclease"/>
    <property type="match status" value="1"/>
</dbReference>
<dbReference type="HAMAP" id="MF_00265">
    <property type="entry name" value="VapC_Nob1"/>
    <property type="match status" value="1"/>
</dbReference>
<dbReference type="InterPro" id="IPR006226">
    <property type="entry name" value="Mtu_PIN"/>
</dbReference>
<dbReference type="InterPro" id="IPR029060">
    <property type="entry name" value="PIN-like_dom_sf"/>
</dbReference>
<dbReference type="InterPro" id="IPR002716">
    <property type="entry name" value="PIN_dom"/>
</dbReference>
<dbReference type="InterPro" id="IPR022907">
    <property type="entry name" value="VapC_family"/>
</dbReference>
<dbReference type="NCBIfam" id="TIGR00028">
    <property type="entry name" value="Mtu_PIN_fam"/>
    <property type="match status" value="1"/>
</dbReference>
<dbReference type="Pfam" id="PF01850">
    <property type="entry name" value="PIN"/>
    <property type="match status" value="1"/>
</dbReference>
<dbReference type="SUPFAM" id="SSF88723">
    <property type="entry name" value="PIN domain-like"/>
    <property type="match status" value="1"/>
</dbReference>
<name>VPC41_MYCTO</name>
<evidence type="ECO:0000255" key="1">
    <source>
        <dbReference type="HAMAP-Rule" id="MF_00265"/>
    </source>
</evidence>
<reference key="1">
    <citation type="journal article" date="2002" name="J. Bacteriol.">
        <title>Whole-genome comparison of Mycobacterium tuberculosis clinical and laboratory strains.</title>
        <authorList>
            <person name="Fleischmann R.D."/>
            <person name="Alland D."/>
            <person name="Eisen J.A."/>
            <person name="Carpenter L."/>
            <person name="White O."/>
            <person name="Peterson J.D."/>
            <person name="DeBoy R.T."/>
            <person name="Dodson R.J."/>
            <person name="Gwinn M.L."/>
            <person name="Haft D.H."/>
            <person name="Hickey E.K."/>
            <person name="Kolonay J.F."/>
            <person name="Nelson W.C."/>
            <person name="Umayam L.A."/>
            <person name="Ermolaeva M.D."/>
            <person name="Salzberg S.L."/>
            <person name="Delcher A."/>
            <person name="Utterback T.R."/>
            <person name="Weidman J.F."/>
            <person name="Khouri H.M."/>
            <person name="Gill J."/>
            <person name="Mikula A."/>
            <person name="Bishai W."/>
            <person name="Jacobs W.R. Jr."/>
            <person name="Venter J.C."/>
            <person name="Fraser C.M."/>
        </authorList>
    </citation>
    <scope>NUCLEOTIDE SEQUENCE [LARGE SCALE GENOMIC DNA]</scope>
    <source>
        <strain>CDC 1551 / Oshkosh</strain>
    </source>
</reference>
<proteinExistence type="inferred from homology"/>
<keyword id="KW-0378">Hydrolase</keyword>
<keyword id="KW-0460">Magnesium</keyword>
<keyword id="KW-0479">Metal-binding</keyword>
<keyword id="KW-0540">Nuclease</keyword>
<keyword id="KW-1185">Reference proteome</keyword>
<keyword id="KW-1277">Toxin-antitoxin system</keyword>
<protein>
    <recommendedName>
        <fullName evidence="1">Ribonuclease VapC41</fullName>
        <shortName evidence="1">RNase VapC41</shortName>
        <ecNumber evidence="1">3.1.-.-</ecNumber>
    </recommendedName>
    <alternativeName>
        <fullName evidence="1">Toxin VapC41</fullName>
    </alternativeName>
</protein>
<organism>
    <name type="scientific">Mycobacterium tuberculosis (strain CDC 1551 / Oshkosh)</name>
    <dbReference type="NCBI Taxonomy" id="83331"/>
    <lineage>
        <taxon>Bacteria</taxon>
        <taxon>Bacillati</taxon>
        <taxon>Actinomycetota</taxon>
        <taxon>Actinomycetes</taxon>
        <taxon>Mycobacteriales</taxon>
        <taxon>Mycobacteriaceae</taxon>
        <taxon>Mycobacterium</taxon>
        <taxon>Mycobacterium tuberculosis complex</taxon>
    </lineage>
</organism>
<accession>P9WF58</accession>
<accession>L0TBR4</accession>
<accession>O33215</accession>
<accession>Q7D6X2</accession>
<gene>
    <name evidence="1" type="primary">vapC41</name>
    <name type="ordered locus">MT2677</name>
</gene>
<sequence length="146" mass="16026">MLLCDTNIWLALALSGHVHHRASRAWLDTINAPGVIHFCRATQQSLLRLLTNRTVLGAYGSPPLTNREAWAAYAAFLDDDRIVLAGAEPDGLEAQWRAFAVRQSPAPKVWMDAYLAAFALTGGFELVTTDTAFTQYGGIELRLLAK</sequence>
<comment type="function">
    <text evidence="1">Toxic component of a type II toxin-antitoxin (TA) system. An RNase. Its toxic effect is neutralized by coexpression with cognate antitoxin VapB41 (By similarity).</text>
</comment>
<comment type="cofactor">
    <cofactor evidence="1">
        <name>Mg(2+)</name>
        <dbReference type="ChEBI" id="CHEBI:18420"/>
    </cofactor>
</comment>
<comment type="similarity">
    <text evidence="1">Belongs to the PINc/VapC protein family.</text>
</comment>